<organism>
    <name type="scientific">Yersinia enterocolitica serotype O:8 / biotype 1B (strain NCTC 13174 / 8081)</name>
    <dbReference type="NCBI Taxonomy" id="393305"/>
    <lineage>
        <taxon>Bacteria</taxon>
        <taxon>Pseudomonadati</taxon>
        <taxon>Pseudomonadota</taxon>
        <taxon>Gammaproteobacteria</taxon>
        <taxon>Enterobacterales</taxon>
        <taxon>Yersiniaceae</taxon>
        <taxon>Yersinia</taxon>
    </lineage>
</organism>
<gene>
    <name evidence="1" type="primary">rpsF</name>
    <name type="ordered locus">YE0392</name>
</gene>
<evidence type="ECO:0000255" key="1">
    <source>
        <dbReference type="HAMAP-Rule" id="MF_00360"/>
    </source>
</evidence>
<evidence type="ECO:0000256" key="2">
    <source>
        <dbReference type="SAM" id="MobiDB-lite"/>
    </source>
</evidence>
<evidence type="ECO:0000305" key="3"/>
<feature type="chain" id="PRO_1000005384" description="Small ribosomal subunit protein bS6">
    <location>
        <begin position="1"/>
        <end position="130"/>
    </location>
</feature>
<feature type="region of interest" description="Disordered" evidence="2">
    <location>
        <begin position="99"/>
        <end position="130"/>
    </location>
</feature>
<feature type="compositionally biased region" description="Basic and acidic residues" evidence="2">
    <location>
        <begin position="104"/>
        <end position="116"/>
    </location>
</feature>
<feature type="compositionally biased region" description="Acidic residues" evidence="2">
    <location>
        <begin position="119"/>
        <end position="130"/>
    </location>
</feature>
<comment type="function">
    <text evidence="1">Binds together with bS18 to 16S ribosomal RNA.</text>
</comment>
<comment type="similarity">
    <text evidence="1">Belongs to the bacterial ribosomal protein bS6 family.</text>
</comment>
<protein>
    <recommendedName>
        <fullName evidence="1">Small ribosomal subunit protein bS6</fullName>
    </recommendedName>
    <alternativeName>
        <fullName evidence="3">30S ribosomal protein S6</fullName>
    </alternativeName>
</protein>
<keyword id="KW-0687">Ribonucleoprotein</keyword>
<keyword id="KW-0689">Ribosomal protein</keyword>
<keyword id="KW-0694">RNA-binding</keyword>
<keyword id="KW-0699">rRNA-binding</keyword>
<name>RS6_YERE8</name>
<proteinExistence type="inferred from homology"/>
<dbReference type="EMBL" id="AM286415">
    <property type="protein sequence ID" value="CAL10519.1"/>
    <property type="molecule type" value="Genomic_DNA"/>
</dbReference>
<dbReference type="RefSeq" id="WP_002210153.1">
    <property type="nucleotide sequence ID" value="NC_008800.1"/>
</dbReference>
<dbReference type="RefSeq" id="YP_001004765.1">
    <property type="nucleotide sequence ID" value="NC_008800.1"/>
</dbReference>
<dbReference type="SMR" id="A1JIS8"/>
<dbReference type="GeneID" id="97457911"/>
<dbReference type="KEGG" id="yen:YE0392"/>
<dbReference type="PATRIC" id="fig|393305.7.peg.486"/>
<dbReference type="eggNOG" id="COG0360">
    <property type="taxonomic scope" value="Bacteria"/>
</dbReference>
<dbReference type="HOGENOM" id="CLU_113441_6_1_6"/>
<dbReference type="OrthoDB" id="9812702at2"/>
<dbReference type="Proteomes" id="UP000000642">
    <property type="component" value="Chromosome"/>
</dbReference>
<dbReference type="GO" id="GO:0022627">
    <property type="term" value="C:cytosolic small ribosomal subunit"/>
    <property type="evidence" value="ECO:0007669"/>
    <property type="project" value="TreeGrafter"/>
</dbReference>
<dbReference type="GO" id="GO:0070181">
    <property type="term" value="F:small ribosomal subunit rRNA binding"/>
    <property type="evidence" value="ECO:0007669"/>
    <property type="project" value="TreeGrafter"/>
</dbReference>
<dbReference type="GO" id="GO:0003735">
    <property type="term" value="F:structural constituent of ribosome"/>
    <property type="evidence" value="ECO:0007669"/>
    <property type="project" value="InterPro"/>
</dbReference>
<dbReference type="GO" id="GO:0006412">
    <property type="term" value="P:translation"/>
    <property type="evidence" value="ECO:0007669"/>
    <property type="project" value="UniProtKB-UniRule"/>
</dbReference>
<dbReference type="CDD" id="cd00473">
    <property type="entry name" value="bS6"/>
    <property type="match status" value="1"/>
</dbReference>
<dbReference type="FunFam" id="3.30.70.60:FF:000003">
    <property type="entry name" value="30S ribosomal protein S6"/>
    <property type="match status" value="1"/>
</dbReference>
<dbReference type="Gene3D" id="3.30.70.60">
    <property type="match status" value="1"/>
</dbReference>
<dbReference type="HAMAP" id="MF_00360">
    <property type="entry name" value="Ribosomal_bS6"/>
    <property type="match status" value="1"/>
</dbReference>
<dbReference type="InterPro" id="IPR000529">
    <property type="entry name" value="Ribosomal_bS6"/>
</dbReference>
<dbReference type="InterPro" id="IPR020815">
    <property type="entry name" value="Ribosomal_bS6_CS"/>
</dbReference>
<dbReference type="InterPro" id="IPR035980">
    <property type="entry name" value="Ribosomal_bS6_sf"/>
</dbReference>
<dbReference type="InterPro" id="IPR020814">
    <property type="entry name" value="Ribosomal_S6_plastid/chlpt"/>
</dbReference>
<dbReference type="InterPro" id="IPR014717">
    <property type="entry name" value="Transl_elong_EF1B/ribsomal_bS6"/>
</dbReference>
<dbReference type="NCBIfam" id="TIGR00166">
    <property type="entry name" value="S6"/>
    <property type="match status" value="1"/>
</dbReference>
<dbReference type="PANTHER" id="PTHR21011">
    <property type="entry name" value="MITOCHONDRIAL 28S RIBOSOMAL PROTEIN S6"/>
    <property type="match status" value="1"/>
</dbReference>
<dbReference type="PANTHER" id="PTHR21011:SF1">
    <property type="entry name" value="SMALL RIBOSOMAL SUBUNIT PROTEIN BS6M"/>
    <property type="match status" value="1"/>
</dbReference>
<dbReference type="Pfam" id="PF01250">
    <property type="entry name" value="Ribosomal_S6"/>
    <property type="match status" value="1"/>
</dbReference>
<dbReference type="SUPFAM" id="SSF54995">
    <property type="entry name" value="Ribosomal protein S6"/>
    <property type="match status" value="1"/>
</dbReference>
<dbReference type="PROSITE" id="PS01048">
    <property type="entry name" value="RIBOSOMAL_S6"/>
    <property type="match status" value="1"/>
</dbReference>
<reference key="1">
    <citation type="journal article" date="2006" name="PLoS Genet.">
        <title>The complete genome sequence and comparative genome analysis of the high pathogenicity Yersinia enterocolitica strain 8081.</title>
        <authorList>
            <person name="Thomson N.R."/>
            <person name="Howard S."/>
            <person name="Wren B.W."/>
            <person name="Holden M.T.G."/>
            <person name="Crossman L."/>
            <person name="Challis G.L."/>
            <person name="Churcher C."/>
            <person name="Mungall K."/>
            <person name="Brooks K."/>
            <person name="Chillingworth T."/>
            <person name="Feltwell T."/>
            <person name="Abdellah Z."/>
            <person name="Hauser H."/>
            <person name="Jagels K."/>
            <person name="Maddison M."/>
            <person name="Moule S."/>
            <person name="Sanders M."/>
            <person name="Whitehead S."/>
            <person name="Quail M.A."/>
            <person name="Dougan G."/>
            <person name="Parkhill J."/>
            <person name="Prentice M.B."/>
        </authorList>
    </citation>
    <scope>NUCLEOTIDE SEQUENCE [LARGE SCALE GENOMIC DNA]</scope>
    <source>
        <strain>NCTC 13174 / 8081</strain>
    </source>
</reference>
<accession>A1JIS8</accession>
<sequence>MRHYEIVFMVHPDQSEQVPGMIERYSATITNAAGTIHRLEDWGRRQLAYPINKLHKAHYVLLNVEAPQEAIDELETNFRFNDAVIRSMVMRVKHAVTEASPMVKAKDERRERHDFASEANDDSEAGDSEE</sequence>